<proteinExistence type="inferred from homology"/>
<feature type="chain" id="PRO_0000231857" description="Pyridoxine 5'-phosphate synthase">
    <location>
        <begin position="1"/>
        <end position="256"/>
    </location>
</feature>
<feature type="active site" description="Proton acceptor" evidence="1">
    <location>
        <position position="44"/>
    </location>
</feature>
<feature type="active site" description="Proton acceptor" evidence="1">
    <location>
        <position position="74"/>
    </location>
</feature>
<feature type="active site" description="Proton donor" evidence="1">
    <location>
        <position position="202"/>
    </location>
</feature>
<feature type="binding site" evidence="1">
    <location>
        <position position="8"/>
    </location>
    <ligand>
        <name>3-amino-2-oxopropyl phosphate</name>
        <dbReference type="ChEBI" id="CHEBI:57279"/>
    </ligand>
</feature>
<feature type="binding site" evidence="1">
    <location>
        <position position="19"/>
    </location>
    <ligand>
        <name>3-amino-2-oxopropyl phosphate</name>
        <dbReference type="ChEBI" id="CHEBI:57279"/>
    </ligand>
</feature>
<feature type="binding site" evidence="1">
    <location>
        <position position="46"/>
    </location>
    <ligand>
        <name>1-deoxy-D-xylulose 5-phosphate</name>
        <dbReference type="ChEBI" id="CHEBI:57792"/>
    </ligand>
</feature>
<feature type="binding site" evidence="1">
    <location>
        <position position="51"/>
    </location>
    <ligand>
        <name>1-deoxy-D-xylulose 5-phosphate</name>
        <dbReference type="ChEBI" id="CHEBI:57792"/>
    </ligand>
</feature>
<feature type="binding site" evidence="1">
    <location>
        <position position="111"/>
    </location>
    <ligand>
        <name>1-deoxy-D-xylulose 5-phosphate</name>
        <dbReference type="ChEBI" id="CHEBI:57792"/>
    </ligand>
</feature>
<feature type="binding site" evidence="1">
    <location>
        <position position="203"/>
    </location>
    <ligand>
        <name>3-amino-2-oxopropyl phosphate</name>
        <dbReference type="ChEBI" id="CHEBI:57279"/>
    </ligand>
</feature>
<feature type="binding site" evidence="1">
    <location>
        <begin position="225"/>
        <end position="226"/>
    </location>
    <ligand>
        <name>3-amino-2-oxopropyl phosphate</name>
        <dbReference type="ChEBI" id="CHEBI:57279"/>
    </ligand>
</feature>
<feature type="site" description="Transition state stabilizer" evidence="1">
    <location>
        <position position="162"/>
    </location>
</feature>
<protein>
    <recommendedName>
        <fullName evidence="1">Pyridoxine 5'-phosphate synthase</fullName>
        <shortName evidence="1">PNP synthase</shortName>
        <ecNumber evidence="1">2.6.99.2</ecNumber>
    </recommendedName>
</protein>
<gene>
    <name evidence="1" type="primary">pdxJ</name>
    <name type="ordered locus">XC_0012</name>
</gene>
<name>PDXJ_XANC8</name>
<evidence type="ECO:0000255" key="1">
    <source>
        <dbReference type="HAMAP-Rule" id="MF_00279"/>
    </source>
</evidence>
<keyword id="KW-0963">Cytoplasm</keyword>
<keyword id="KW-0664">Pyridoxine biosynthesis</keyword>
<keyword id="KW-0808">Transferase</keyword>
<reference key="1">
    <citation type="journal article" date="2005" name="Genome Res.">
        <title>Comparative and functional genomic analyses of the pathogenicity of phytopathogen Xanthomonas campestris pv. campestris.</title>
        <authorList>
            <person name="Qian W."/>
            <person name="Jia Y."/>
            <person name="Ren S.-X."/>
            <person name="He Y.-Q."/>
            <person name="Feng J.-X."/>
            <person name="Lu L.-F."/>
            <person name="Sun Q."/>
            <person name="Ying G."/>
            <person name="Tang D.-J."/>
            <person name="Tang H."/>
            <person name="Wu W."/>
            <person name="Hao P."/>
            <person name="Wang L."/>
            <person name="Jiang B.-L."/>
            <person name="Zeng S."/>
            <person name="Gu W.-Y."/>
            <person name="Lu G."/>
            <person name="Rong L."/>
            <person name="Tian Y."/>
            <person name="Yao Z."/>
            <person name="Fu G."/>
            <person name="Chen B."/>
            <person name="Fang R."/>
            <person name="Qiang B."/>
            <person name="Chen Z."/>
            <person name="Zhao G.-P."/>
            <person name="Tang J.-L."/>
            <person name="He C."/>
        </authorList>
    </citation>
    <scope>NUCLEOTIDE SEQUENCE [LARGE SCALE GENOMIC DNA]</scope>
    <source>
        <strain>8004</strain>
    </source>
</reference>
<comment type="function">
    <text evidence="1">Catalyzes the complicated ring closure reaction between the two acyclic compounds 1-deoxy-D-xylulose-5-phosphate (DXP) and 3-amino-2-oxopropyl phosphate (1-amino-acetone-3-phosphate or AAP) to form pyridoxine 5'-phosphate (PNP) and inorganic phosphate.</text>
</comment>
<comment type="catalytic activity">
    <reaction evidence="1">
        <text>3-amino-2-oxopropyl phosphate + 1-deoxy-D-xylulose 5-phosphate = pyridoxine 5'-phosphate + phosphate + 2 H2O + H(+)</text>
        <dbReference type="Rhea" id="RHEA:15265"/>
        <dbReference type="ChEBI" id="CHEBI:15377"/>
        <dbReference type="ChEBI" id="CHEBI:15378"/>
        <dbReference type="ChEBI" id="CHEBI:43474"/>
        <dbReference type="ChEBI" id="CHEBI:57279"/>
        <dbReference type="ChEBI" id="CHEBI:57792"/>
        <dbReference type="ChEBI" id="CHEBI:58589"/>
        <dbReference type="EC" id="2.6.99.2"/>
    </reaction>
</comment>
<comment type="pathway">
    <text evidence="1">Cofactor biosynthesis; pyridoxine 5'-phosphate biosynthesis; pyridoxine 5'-phosphate from D-erythrose 4-phosphate: step 5/5.</text>
</comment>
<comment type="subunit">
    <text evidence="1">Homooctamer; tetramer of dimers.</text>
</comment>
<comment type="subcellular location">
    <subcellularLocation>
        <location evidence="1">Cytoplasm</location>
    </subcellularLocation>
</comment>
<comment type="similarity">
    <text evidence="1">Belongs to the PNP synthase family.</text>
</comment>
<accession>Q4V0R7</accession>
<sequence length="256" mass="26800">MSTHLSVNVNKIAVLRNSRGGQDPDVVQAARSCIAAGAHGITVHPRPDQRHIRADDVYALSTLTRMHGVEFNIEGNPFAPPRAGYPGLLELCRATRPQQVTLVPDGDGQLTSDHGVDFARDGARLAPLIAAFKTLGCRVSLFVDAGNPEIAQAAALGADRIELYTGPYAEAHHHGQSQPSLALFADAARRAHAAGLGINAGHDLSQHNLADFLAGVPDVLEVSIGHALVGEALYQGLEPTVRAYLAIIAGGATTAA</sequence>
<dbReference type="EC" id="2.6.99.2" evidence="1"/>
<dbReference type="EMBL" id="CP000050">
    <property type="protein sequence ID" value="AAY47106.1"/>
    <property type="molecule type" value="Genomic_DNA"/>
</dbReference>
<dbReference type="RefSeq" id="WP_011035270.1">
    <property type="nucleotide sequence ID" value="NZ_CP155948.1"/>
</dbReference>
<dbReference type="SMR" id="Q4V0R7"/>
<dbReference type="KEGG" id="xcb:XC_0012"/>
<dbReference type="HOGENOM" id="CLU_074563_1_0_6"/>
<dbReference type="UniPathway" id="UPA00244">
    <property type="reaction ID" value="UER00313"/>
</dbReference>
<dbReference type="Proteomes" id="UP000000420">
    <property type="component" value="Chromosome"/>
</dbReference>
<dbReference type="GO" id="GO:0005829">
    <property type="term" value="C:cytosol"/>
    <property type="evidence" value="ECO:0007669"/>
    <property type="project" value="TreeGrafter"/>
</dbReference>
<dbReference type="GO" id="GO:0033856">
    <property type="term" value="F:pyridoxine 5'-phosphate synthase activity"/>
    <property type="evidence" value="ECO:0007669"/>
    <property type="project" value="UniProtKB-EC"/>
</dbReference>
<dbReference type="GO" id="GO:0008615">
    <property type="term" value="P:pyridoxine biosynthetic process"/>
    <property type="evidence" value="ECO:0007669"/>
    <property type="project" value="UniProtKB-UniRule"/>
</dbReference>
<dbReference type="CDD" id="cd00003">
    <property type="entry name" value="PNPsynthase"/>
    <property type="match status" value="1"/>
</dbReference>
<dbReference type="FunFam" id="3.20.20.70:FF:000150">
    <property type="entry name" value="Pyridoxine 5'-phosphate synthase"/>
    <property type="match status" value="1"/>
</dbReference>
<dbReference type="Gene3D" id="3.20.20.70">
    <property type="entry name" value="Aldolase class I"/>
    <property type="match status" value="1"/>
</dbReference>
<dbReference type="HAMAP" id="MF_00279">
    <property type="entry name" value="PdxJ"/>
    <property type="match status" value="1"/>
</dbReference>
<dbReference type="InterPro" id="IPR013785">
    <property type="entry name" value="Aldolase_TIM"/>
</dbReference>
<dbReference type="InterPro" id="IPR004569">
    <property type="entry name" value="PyrdxlP_synth_PdxJ"/>
</dbReference>
<dbReference type="InterPro" id="IPR036130">
    <property type="entry name" value="Pyridoxine-5'_phos_synth"/>
</dbReference>
<dbReference type="NCBIfam" id="TIGR00559">
    <property type="entry name" value="pdxJ"/>
    <property type="match status" value="1"/>
</dbReference>
<dbReference type="NCBIfam" id="NF003626">
    <property type="entry name" value="PRK05265.1-4"/>
    <property type="match status" value="1"/>
</dbReference>
<dbReference type="PANTHER" id="PTHR30456">
    <property type="entry name" value="PYRIDOXINE 5'-PHOSPHATE SYNTHASE"/>
    <property type="match status" value="1"/>
</dbReference>
<dbReference type="PANTHER" id="PTHR30456:SF0">
    <property type="entry name" value="PYRIDOXINE 5'-PHOSPHATE SYNTHASE"/>
    <property type="match status" value="1"/>
</dbReference>
<dbReference type="Pfam" id="PF03740">
    <property type="entry name" value="PdxJ"/>
    <property type="match status" value="1"/>
</dbReference>
<dbReference type="SUPFAM" id="SSF63892">
    <property type="entry name" value="Pyridoxine 5'-phosphate synthase"/>
    <property type="match status" value="1"/>
</dbReference>
<organism>
    <name type="scientific">Xanthomonas campestris pv. campestris (strain 8004)</name>
    <dbReference type="NCBI Taxonomy" id="314565"/>
    <lineage>
        <taxon>Bacteria</taxon>
        <taxon>Pseudomonadati</taxon>
        <taxon>Pseudomonadota</taxon>
        <taxon>Gammaproteobacteria</taxon>
        <taxon>Lysobacterales</taxon>
        <taxon>Lysobacteraceae</taxon>
        <taxon>Xanthomonas</taxon>
    </lineage>
</organism>